<name>RL32_SINMW</name>
<keyword id="KW-0687">Ribonucleoprotein</keyword>
<keyword id="KW-0689">Ribosomal protein</keyword>
<proteinExistence type="inferred from homology"/>
<evidence type="ECO:0000255" key="1">
    <source>
        <dbReference type="HAMAP-Rule" id="MF_00340"/>
    </source>
</evidence>
<evidence type="ECO:0000256" key="2">
    <source>
        <dbReference type="SAM" id="MobiDB-lite"/>
    </source>
</evidence>
<evidence type="ECO:0000305" key="3"/>
<protein>
    <recommendedName>
        <fullName evidence="1">Large ribosomal subunit protein bL32</fullName>
    </recommendedName>
    <alternativeName>
        <fullName evidence="3">50S ribosomal protein L32</fullName>
    </alternativeName>
</protein>
<organism>
    <name type="scientific">Sinorhizobium medicae (strain WSM419)</name>
    <name type="common">Ensifer medicae</name>
    <dbReference type="NCBI Taxonomy" id="366394"/>
    <lineage>
        <taxon>Bacteria</taxon>
        <taxon>Pseudomonadati</taxon>
        <taxon>Pseudomonadota</taxon>
        <taxon>Alphaproteobacteria</taxon>
        <taxon>Hyphomicrobiales</taxon>
        <taxon>Rhizobiaceae</taxon>
        <taxon>Sinorhizobium/Ensifer group</taxon>
        <taxon>Sinorhizobium</taxon>
    </lineage>
</organism>
<dbReference type="EMBL" id="CP000738">
    <property type="protein sequence ID" value="ABR61945.1"/>
    <property type="molecule type" value="Genomic_DNA"/>
</dbReference>
<dbReference type="RefSeq" id="WP_012067326.1">
    <property type="nucleotide sequence ID" value="NC_009636.1"/>
</dbReference>
<dbReference type="RefSeq" id="YP_001328780.1">
    <property type="nucleotide sequence ID" value="NC_009636.1"/>
</dbReference>
<dbReference type="SMR" id="A6UE65"/>
<dbReference type="STRING" id="366394.Smed_3119"/>
<dbReference type="GeneID" id="61610704"/>
<dbReference type="KEGG" id="smd:Smed_3119"/>
<dbReference type="PATRIC" id="fig|366394.8.peg.6351"/>
<dbReference type="eggNOG" id="COG0333">
    <property type="taxonomic scope" value="Bacteria"/>
</dbReference>
<dbReference type="HOGENOM" id="CLU_129084_2_2_5"/>
<dbReference type="OrthoDB" id="9801927at2"/>
<dbReference type="Proteomes" id="UP000001108">
    <property type="component" value="Chromosome"/>
</dbReference>
<dbReference type="GO" id="GO:0015934">
    <property type="term" value="C:large ribosomal subunit"/>
    <property type="evidence" value="ECO:0007669"/>
    <property type="project" value="InterPro"/>
</dbReference>
<dbReference type="GO" id="GO:0003735">
    <property type="term" value="F:structural constituent of ribosome"/>
    <property type="evidence" value="ECO:0007669"/>
    <property type="project" value="InterPro"/>
</dbReference>
<dbReference type="GO" id="GO:0006412">
    <property type="term" value="P:translation"/>
    <property type="evidence" value="ECO:0007669"/>
    <property type="project" value="UniProtKB-UniRule"/>
</dbReference>
<dbReference type="Gene3D" id="1.20.5.640">
    <property type="entry name" value="Single helix bin"/>
    <property type="match status" value="1"/>
</dbReference>
<dbReference type="HAMAP" id="MF_00340">
    <property type="entry name" value="Ribosomal_bL32"/>
    <property type="match status" value="1"/>
</dbReference>
<dbReference type="InterPro" id="IPR002677">
    <property type="entry name" value="Ribosomal_bL32"/>
</dbReference>
<dbReference type="InterPro" id="IPR044957">
    <property type="entry name" value="Ribosomal_bL32_bact"/>
</dbReference>
<dbReference type="InterPro" id="IPR011332">
    <property type="entry name" value="Ribosomal_zn-bd"/>
</dbReference>
<dbReference type="NCBIfam" id="TIGR01031">
    <property type="entry name" value="rpmF_bact"/>
    <property type="match status" value="1"/>
</dbReference>
<dbReference type="PANTHER" id="PTHR35534">
    <property type="entry name" value="50S RIBOSOMAL PROTEIN L32"/>
    <property type="match status" value="1"/>
</dbReference>
<dbReference type="PANTHER" id="PTHR35534:SF1">
    <property type="entry name" value="LARGE RIBOSOMAL SUBUNIT PROTEIN BL32"/>
    <property type="match status" value="1"/>
</dbReference>
<dbReference type="Pfam" id="PF01783">
    <property type="entry name" value="Ribosomal_L32p"/>
    <property type="match status" value="1"/>
</dbReference>
<dbReference type="SUPFAM" id="SSF57829">
    <property type="entry name" value="Zn-binding ribosomal proteins"/>
    <property type="match status" value="1"/>
</dbReference>
<feature type="chain" id="PRO_1000005080" description="Large ribosomal subunit protein bL32">
    <location>
        <begin position="1"/>
        <end position="61"/>
    </location>
</feature>
<feature type="region of interest" description="Disordered" evidence="2">
    <location>
        <begin position="1"/>
        <end position="40"/>
    </location>
</feature>
<feature type="compositionally biased region" description="Basic residues" evidence="2">
    <location>
        <begin position="1"/>
        <end position="16"/>
    </location>
</feature>
<feature type="compositionally biased region" description="Basic and acidic residues" evidence="2">
    <location>
        <begin position="28"/>
        <end position="40"/>
    </location>
</feature>
<sequence length="61" mass="6920">MAVPKRKTSPSKRGMRRSADALKAPTYIEDKNSGELRRPHHIDLKTGMYRGRQVLTPKESA</sequence>
<accession>A6UE65</accession>
<reference key="1">
    <citation type="submission" date="2007-06" db="EMBL/GenBank/DDBJ databases">
        <title>Complete sequence of Sinorhizobium medicae WSM419 chromosome.</title>
        <authorList>
            <consortium name="US DOE Joint Genome Institute"/>
            <person name="Copeland A."/>
            <person name="Lucas S."/>
            <person name="Lapidus A."/>
            <person name="Barry K."/>
            <person name="Glavina del Rio T."/>
            <person name="Dalin E."/>
            <person name="Tice H."/>
            <person name="Pitluck S."/>
            <person name="Chain P."/>
            <person name="Malfatti S."/>
            <person name="Shin M."/>
            <person name="Vergez L."/>
            <person name="Schmutz J."/>
            <person name="Larimer F."/>
            <person name="Land M."/>
            <person name="Hauser L."/>
            <person name="Kyrpides N."/>
            <person name="Mikhailova N."/>
            <person name="Reeve W.G."/>
            <person name="Richardson P."/>
        </authorList>
    </citation>
    <scope>NUCLEOTIDE SEQUENCE [LARGE SCALE GENOMIC DNA]</scope>
    <source>
        <strain>WSM419</strain>
    </source>
</reference>
<comment type="similarity">
    <text evidence="1">Belongs to the bacterial ribosomal protein bL32 family.</text>
</comment>
<gene>
    <name evidence="1" type="primary">rpmF</name>
    <name type="ordered locus">Smed_3119</name>
</gene>